<evidence type="ECO:0000255" key="1">
    <source>
        <dbReference type="HAMAP-Rule" id="MF_01724"/>
    </source>
</evidence>
<gene>
    <name evidence="1" type="primary">ssuB2</name>
    <name type="ordered locus">FRAAL3340</name>
</gene>
<dbReference type="EC" id="7.6.2.14" evidence="1"/>
<dbReference type="EMBL" id="CT573213">
    <property type="protein sequence ID" value="CAJ61984.1"/>
    <property type="molecule type" value="Genomic_DNA"/>
</dbReference>
<dbReference type="RefSeq" id="WP_011604487.1">
    <property type="nucleotide sequence ID" value="NC_008278.1"/>
</dbReference>
<dbReference type="SMR" id="Q0RKH4"/>
<dbReference type="STRING" id="326424.FRAAL3340"/>
<dbReference type="KEGG" id="fal:FRAAL3340"/>
<dbReference type="eggNOG" id="COG1116">
    <property type="taxonomic scope" value="Bacteria"/>
</dbReference>
<dbReference type="HOGENOM" id="CLU_000604_1_22_11"/>
<dbReference type="OrthoDB" id="3210486at2"/>
<dbReference type="Proteomes" id="UP000000657">
    <property type="component" value="Chromosome"/>
</dbReference>
<dbReference type="GO" id="GO:0005886">
    <property type="term" value="C:plasma membrane"/>
    <property type="evidence" value="ECO:0007669"/>
    <property type="project" value="UniProtKB-SubCell"/>
</dbReference>
<dbReference type="GO" id="GO:0005524">
    <property type="term" value="F:ATP binding"/>
    <property type="evidence" value="ECO:0007669"/>
    <property type="project" value="UniProtKB-KW"/>
</dbReference>
<dbReference type="GO" id="GO:0016887">
    <property type="term" value="F:ATP hydrolysis activity"/>
    <property type="evidence" value="ECO:0007669"/>
    <property type="project" value="InterPro"/>
</dbReference>
<dbReference type="Gene3D" id="3.40.50.300">
    <property type="entry name" value="P-loop containing nucleotide triphosphate hydrolases"/>
    <property type="match status" value="1"/>
</dbReference>
<dbReference type="InterPro" id="IPR003593">
    <property type="entry name" value="AAA+_ATPase"/>
</dbReference>
<dbReference type="InterPro" id="IPR003439">
    <property type="entry name" value="ABC_transporter-like_ATP-bd"/>
</dbReference>
<dbReference type="InterPro" id="IPR017871">
    <property type="entry name" value="ABC_transporter-like_CS"/>
</dbReference>
<dbReference type="InterPro" id="IPR050166">
    <property type="entry name" value="ABC_transporter_ATP-bind"/>
</dbReference>
<dbReference type="InterPro" id="IPR027417">
    <property type="entry name" value="P-loop_NTPase"/>
</dbReference>
<dbReference type="PANTHER" id="PTHR42788:SF17">
    <property type="entry name" value="ALIPHATIC SULFONATES IMPORT ATP-BINDING PROTEIN SSUB"/>
    <property type="match status" value="1"/>
</dbReference>
<dbReference type="PANTHER" id="PTHR42788">
    <property type="entry name" value="TAURINE IMPORT ATP-BINDING PROTEIN-RELATED"/>
    <property type="match status" value="1"/>
</dbReference>
<dbReference type="Pfam" id="PF00005">
    <property type="entry name" value="ABC_tran"/>
    <property type="match status" value="1"/>
</dbReference>
<dbReference type="SMART" id="SM00382">
    <property type="entry name" value="AAA"/>
    <property type="match status" value="1"/>
</dbReference>
<dbReference type="SUPFAM" id="SSF52540">
    <property type="entry name" value="P-loop containing nucleoside triphosphate hydrolases"/>
    <property type="match status" value="1"/>
</dbReference>
<dbReference type="PROSITE" id="PS00211">
    <property type="entry name" value="ABC_TRANSPORTER_1"/>
    <property type="match status" value="1"/>
</dbReference>
<dbReference type="PROSITE" id="PS50893">
    <property type="entry name" value="ABC_TRANSPORTER_2"/>
    <property type="match status" value="1"/>
</dbReference>
<dbReference type="PROSITE" id="PS51291">
    <property type="entry name" value="SSUB"/>
    <property type="match status" value="1"/>
</dbReference>
<accession>Q0RKH4</accession>
<name>SSUB2_FRAAA</name>
<protein>
    <recommendedName>
        <fullName evidence="1">Aliphatic sulfonates import ATP-binding protein SsuB 2</fullName>
        <ecNumber evidence="1">7.6.2.14</ecNumber>
    </recommendedName>
</protein>
<organism>
    <name type="scientific">Frankia alni (strain DSM 45986 / CECT 9034 / ACN14a)</name>
    <dbReference type="NCBI Taxonomy" id="326424"/>
    <lineage>
        <taxon>Bacteria</taxon>
        <taxon>Bacillati</taxon>
        <taxon>Actinomycetota</taxon>
        <taxon>Actinomycetes</taxon>
        <taxon>Frankiales</taxon>
        <taxon>Frankiaceae</taxon>
        <taxon>Frankia</taxon>
    </lineage>
</organism>
<keyword id="KW-0067">ATP-binding</keyword>
<keyword id="KW-1003">Cell membrane</keyword>
<keyword id="KW-0472">Membrane</keyword>
<keyword id="KW-0547">Nucleotide-binding</keyword>
<keyword id="KW-1185">Reference proteome</keyword>
<keyword id="KW-1278">Translocase</keyword>
<keyword id="KW-0813">Transport</keyword>
<feature type="chain" id="PRO_0000279917" description="Aliphatic sulfonates import ATP-binding protein SsuB 2">
    <location>
        <begin position="1"/>
        <end position="246"/>
    </location>
</feature>
<feature type="domain" description="ABC transporter" evidence="1">
    <location>
        <begin position="4"/>
        <end position="218"/>
    </location>
</feature>
<feature type="binding site" evidence="1">
    <location>
        <begin position="36"/>
        <end position="43"/>
    </location>
    <ligand>
        <name>ATP</name>
        <dbReference type="ChEBI" id="CHEBI:30616"/>
    </ligand>
</feature>
<sequence length="246" mass="26935">MGAVTVRGLRRAFGSHVVLDQLDLTIAESEFVALVGRSGGGKTTLLRTLAGLDPVAEGSVEVPALRSVVFQEPRLLPWRRVWQNVALGLPRSRGRDEATKALAEVGLADHARAWPLTLSGGEAQRVALARALVREPELLLLDEPFGALDALTRIHMHALVRQLHERHRPAVLLVTHDVDEALELADRVIVLRDGRLDEQIETRELFDDRRDPRFEQARARLLGLLGVTDTHVADPTATPSSAATAP</sequence>
<reference key="1">
    <citation type="journal article" date="2007" name="Genome Res.">
        <title>Genome characteristics of facultatively symbiotic Frankia sp. strains reflect host range and host plant biogeography.</title>
        <authorList>
            <person name="Normand P."/>
            <person name="Lapierre P."/>
            <person name="Tisa L.S."/>
            <person name="Gogarten J.P."/>
            <person name="Alloisio N."/>
            <person name="Bagnarol E."/>
            <person name="Bassi C.A."/>
            <person name="Berry A.M."/>
            <person name="Bickhart D.M."/>
            <person name="Choisne N."/>
            <person name="Couloux A."/>
            <person name="Cournoyer B."/>
            <person name="Cruveiller S."/>
            <person name="Daubin V."/>
            <person name="Demange N."/>
            <person name="Francino M.P."/>
            <person name="Goltsman E."/>
            <person name="Huang Y."/>
            <person name="Kopp O.R."/>
            <person name="Labarre L."/>
            <person name="Lapidus A."/>
            <person name="Lavire C."/>
            <person name="Marechal J."/>
            <person name="Martinez M."/>
            <person name="Mastronunzio J.E."/>
            <person name="Mullin B.C."/>
            <person name="Niemann J."/>
            <person name="Pujic P."/>
            <person name="Rawnsley T."/>
            <person name="Rouy Z."/>
            <person name="Schenowitz C."/>
            <person name="Sellstedt A."/>
            <person name="Tavares F."/>
            <person name="Tomkins J.P."/>
            <person name="Vallenet D."/>
            <person name="Valverde C."/>
            <person name="Wall L.G."/>
            <person name="Wang Y."/>
            <person name="Medigue C."/>
            <person name="Benson D.R."/>
        </authorList>
    </citation>
    <scope>NUCLEOTIDE SEQUENCE [LARGE SCALE GENOMIC DNA]</scope>
    <source>
        <strain>DSM 45986 / CECT 9034 / ACN14a</strain>
    </source>
</reference>
<proteinExistence type="inferred from homology"/>
<comment type="function">
    <text evidence="1">Part of the ABC transporter complex SsuABC involved in aliphatic sulfonates import. Responsible for energy coupling to the transport system.</text>
</comment>
<comment type="catalytic activity">
    <reaction evidence="1">
        <text>ATP + H2O + aliphatic sulfonate-[sulfonate-binding protein]Side 1 = ADP + phosphate + aliphatic sulfonateSide 2 + [sulfonate-binding protein]Side 1.</text>
        <dbReference type="EC" id="7.6.2.14"/>
    </reaction>
</comment>
<comment type="subunit">
    <text evidence="1">The complex is composed of two ATP-binding proteins (SsuB), two transmembrane proteins (SsuC) and a solute-binding protein (SsuA).</text>
</comment>
<comment type="subcellular location">
    <subcellularLocation>
        <location evidence="1">Cell membrane</location>
        <topology evidence="1">Peripheral membrane protein</topology>
    </subcellularLocation>
</comment>
<comment type="similarity">
    <text evidence="1">Belongs to the ABC transporter superfamily. Aliphatic sulfonates importer (TC 3.A.1.17.2) family.</text>
</comment>